<sequence length="156" mass="17373">MINLSILISSSEVSGPGGLFDINATLPLVAIQFILLMVTLNIILYSPLLTIIEERKEYVLSHLAQASEKLAQAKELTTQYEQDLETARKEAQLEIANSQNIHKEILDIELDISQKYIDNLLETISSDLLNKKKTALDSLDTIVTSLCTEVETKLSI</sequence>
<organism>
    <name type="scientific">Thalassiosira pseudonana</name>
    <name type="common">Marine diatom</name>
    <name type="synonym">Cyclotella nana</name>
    <dbReference type="NCBI Taxonomy" id="35128"/>
    <lineage>
        <taxon>Eukaryota</taxon>
        <taxon>Sar</taxon>
        <taxon>Stramenopiles</taxon>
        <taxon>Ochrophyta</taxon>
        <taxon>Bacillariophyta</taxon>
        <taxon>Coscinodiscophyceae</taxon>
        <taxon>Thalassiosirophycidae</taxon>
        <taxon>Thalassiosirales</taxon>
        <taxon>Thalassiosiraceae</taxon>
        <taxon>Thalassiosira</taxon>
    </lineage>
</organism>
<geneLocation type="chloroplast"/>
<keyword id="KW-0066">ATP synthesis</keyword>
<keyword id="KW-0138">CF(0)</keyword>
<keyword id="KW-0150">Chloroplast</keyword>
<keyword id="KW-0375">Hydrogen ion transport</keyword>
<keyword id="KW-0406">Ion transport</keyword>
<keyword id="KW-0472">Membrane</keyword>
<keyword id="KW-0934">Plastid</keyword>
<keyword id="KW-0793">Thylakoid</keyword>
<keyword id="KW-0812">Transmembrane</keyword>
<keyword id="KW-1133">Transmembrane helix</keyword>
<keyword id="KW-0813">Transport</keyword>
<name>ATPF2_THAPS</name>
<feature type="chain" id="PRO_0000369064" description="ATP synthase subunit b', chloroplastic">
    <location>
        <begin position="1"/>
        <end position="156"/>
    </location>
</feature>
<feature type="transmembrane region" description="Helical" evidence="1">
    <location>
        <begin position="24"/>
        <end position="44"/>
    </location>
</feature>
<gene>
    <name evidence="1" type="primary">atpF2</name>
    <name evidence="1" type="synonym">atpG</name>
</gene>
<protein>
    <recommendedName>
        <fullName evidence="1">ATP synthase subunit b', chloroplastic</fullName>
    </recommendedName>
    <alternativeName>
        <fullName evidence="1">ATP synthase F(0) sector subunit b'</fullName>
    </alternativeName>
    <alternativeName>
        <fullName evidence="1">ATPase subunit II</fullName>
    </alternativeName>
</protein>
<evidence type="ECO:0000255" key="1">
    <source>
        <dbReference type="HAMAP-Rule" id="MF_01399"/>
    </source>
</evidence>
<accession>A0T0P1</accession>
<proteinExistence type="inferred from homology"/>
<dbReference type="EMBL" id="EF067921">
    <property type="protein sequence ID" value="ABK20726.1"/>
    <property type="molecule type" value="Genomic_DNA"/>
</dbReference>
<dbReference type="RefSeq" id="YP_874503.1">
    <property type="nucleotide sequence ID" value="NC_008589.1"/>
</dbReference>
<dbReference type="SMR" id="A0T0P1"/>
<dbReference type="STRING" id="35128.A0T0P1"/>
<dbReference type="PaxDb" id="35128-Thapsdraft598"/>
<dbReference type="GeneID" id="4524798"/>
<dbReference type="eggNOG" id="ENOG502S8NX">
    <property type="taxonomic scope" value="Eukaryota"/>
</dbReference>
<dbReference type="InParanoid" id="A0T0P1"/>
<dbReference type="OMA" id="HALMATP"/>
<dbReference type="GO" id="GO:0009535">
    <property type="term" value="C:chloroplast thylakoid membrane"/>
    <property type="evidence" value="ECO:0007669"/>
    <property type="project" value="UniProtKB-SubCell"/>
</dbReference>
<dbReference type="GO" id="GO:0045259">
    <property type="term" value="C:proton-transporting ATP synthase complex"/>
    <property type="evidence" value="ECO:0007669"/>
    <property type="project" value="UniProtKB-KW"/>
</dbReference>
<dbReference type="GO" id="GO:0046933">
    <property type="term" value="F:proton-transporting ATP synthase activity, rotational mechanism"/>
    <property type="evidence" value="ECO:0007669"/>
    <property type="project" value="UniProtKB-UniRule"/>
</dbReference>
<dbReference type="CDD" id="cd06503">
    <property type="entry name" value="ATP-synt_Fo_b"/>
    <property type="match status" value="1"/>
</dbReference>
<dbReference type="HAMAP" id="MF_01398">
    <property type="entry name" value="ATP_synth_b_bprime"/>
    <property type="match status" value="1"/>
</dbReference>
<dbReference type="HAMAP" id="MF_01399">
    <property type="entry name" value="ATP_synth_bprime"/>
    <property type="match status" value="1"/>
</dbReference>
<dbReference type="InterPro" id="IPR034679">
    <property type="entry name" value="ATP_synth_b"/>
</dbReference>
<dbReference type="InterPro" id="IPR002146">
    <property type="entry name" value="ATP_synth_b/b'su_bac/chlpt"/>
</dbReference>
<dbReference type="InterPro" id="IPR050059">
    <property type="entry name" value="ATP_synthase_B_chain"/>
</dbReference>
<dbReference type="PANTHER" id="PTHR33445">
    <property type="entry name" value="ATP SYNTHASE SUBUNIT B', CHLOROPLASTIC"/>
    <property type="match status" value="1"/>
</dbReference>
<dbReference type="PANTHER" id="PTHR33445:SF2">
    <property type="entry name" value="ATP SYNTHASE SUBUNIT B', CHLOROPLASTIC"/>
    <property type="match status" value="1"/>
</dbReference>
<dbReference type="Pfam" id="PF00430">
    <property type="entry name" value="ATP-synt_B"/>
    <property type="match status" value="1"/>
</dbReference>
<reference key="1">
    <citation type="journal article" date="2007" name="Mol. Genet. Genomics">
        <title>Chloroplast genomes of the diatoms Phaeodactylum tricornutum and Thalassiosira pseudonana: comparison with other plastid genomes of the red lineage.</title>
        <authorList>
            <person name="Oudot-Le Secq M.-P."/>
            <person name="Grimwood J."/>
            <person name="Shapiro H."/>
            <person name="Armbrust E.V."/>
            <person name="Bowler C."/>
            <person name="Green B.R."/>
        </authorList>
    </citation>
    <scope>NUCLEOTIDE SEQUENCE [LARGE SCALE GENOMIC DNA]</scope>
    <source>
        <strain>CCMP1335 / NEPCC58 / CCAP 1085/12</strain>
    </source>
</reference>
<comment type="function">
    <text evidence="1">F(1)F(0) ATP synthase produces ATP from ADP in the presence of a proton or sodium gradient. F-type ATPases consist of two structural domains, F(1) containing the extramembraneous catalytic core and F(0) containing the membrane proton channel, linked together by a central stalk and a peripheral stalk. During catalysis, ATP synthesis in the catalytic domain of F(1) is coupled via a rotary mechanism of the central stalk subunits to proton translocation.</text>
</comment>
<comment type="function">
    <text evidence="1">Component of the F(0) channel, it forms part of the peripheral stalk, linking F(1) to F(0). The b'-subunit is a diverged and duplicated form of b found in plants and photosynthetic bacteria.</text>
</comment>
<comment type="subunit">
    <text evidence="1">F-type ATPases have 2 components, F(1) - the catalytic core - and F(0) - the membrane proton channel. F(1) has five subunits: alpha(3), beta(3), gamma(1), delta(1), epsilon(1). F(0) has four main subunits: a(1), b(1), b'(1) and c(10-14). The alpha and beta chains form an alternating ring which encloses part of the gamma chain. F(1) is attached to F(0) by a central stalk formed by the gamma and epsilon chains, while a peripheral stalk is formed by the delta, b and b' chains.</text>
</comment>
<comment type="subcellular location">
    <subcellularLocation>
        <location evidence="1">Plastid</location>
        <location evidence="1">Chloroplast thylakoid membrane</location>
        <topology evidence="1">Single-pass membrane protein</topology>
    </subcellularLocation>
</comment>
<comment type="miscellaneous">
    <text>In plastids the F-type ATPase is also known as CF(1)CF(0).</text>
</comment>
<comment type="similarity">
    <text evidence="1">Belongs to the ATPase B chain family.</text>
</comment>